<keyword id="KW-0067">ATP-binding</keyword>
<keyword id="KW-0963">Cytoplasm</keyword>
<keyword id="KW-0275">Fatty acid biosynthesis</keyword>
<keyword id="KW-0276">Fatty acid metabolism</keyword>
<keyword id="KW-0444">Lipid biosynthesis</keyword>
<keyword id="KW-0443">Lipid metabolism</keyword>
<keyword id="KW-0547">Nucleotide-binding</keyword>
<keyword id="KW-1185">Reference proteome</keyword>
<keyword id="KW-0808">Transferase</keyword>
<sequence length="335" mass="36760">MALPLDFEKPLFELETKIDELRTFSQEKDLDFSSEIATLEQKAEELRKKIYRDLTPWQQAQLARHPDRPNTIEYIRLLFEEFYEMKGDRLYGDDPAIVGGIARFQGRPVTVIGHVKGKDTKENIYRNFGMPHPEGYRKALRLMRQAAKFSRPIICFIDTPGAYCGIGAEERGQAEAIARNLLEMAALPVPIISVIIGEGGSGGALALGVADRLLMLEHAVYSVASPESAASILFKDASLAPQAAAAMGITAERLKDLKLIDRIVPEPSGGAHRNPIGTAKELATALSEEIENLLALSAQELVDSRYAKYRNLGLHCIEDASCGTFEAEATDASGT</sequence>
<dbReference type="EC" id="2.1.3.15" evidence="1"/>
<dbReference type="EMBL" id="CP000930">
    <property type="protein sequence ID" value="ABZ82705.1"/>
    <property type="molecule type" value="Genomic_DNA"/>
</dbReference>
<dbReference type="RefSeq" id="WP_012281254.1">
    <property type="nucleotide sequence ID" value="NC_010337.2"/>
</dbReference>
<dbReference type="SMR" id="B0TI32"/>
<dbReference type="STRING" id="498761.HM1_0080"/>
<dbReference type="KEGG" id="hmo:HM1_0080"/>
<dbReference type="eggNOG" id="COG0825">
    <property type="taxonomic scope" value="Bacteria"/>
</dbReference>
<dbReference type="HOGENOM" id="CLU_015486_0_2_9"/>
<dbReference type="OrthoDB" id="9808023at2"/>
<dbReference type="UniPathway" id="UPA00655">
    <property type="reaction ID" value="UER00711"/>
</dbReference>
<dbReference type="Proteomes" id="UP000008550">
    <property type="component" value="Chromosome"/>
</dbReference>
<dbReference type="GO" id="GO:0009317">
    <property type="term" value="C:acetyl-CoA carboxylase complex"/>
    <property type="evidence" value="ECO:0007669"/>
    <property type="project" value="InterPro"/>
</dbReference>
<dbReference type="GO" id="GO:0003989">
    <property type="term" value="F:acetyl-CoA carboxylase activity"/>
    <property type="evidence" value="ECO:0007669"/>
    <property type="project" value="InterPro"/>
</dbReference>
<dbReference type="GO" id="GO:0005524">
    <property type="term" value="F:ATP binding"/>
    <property type="evidence" value="ECO:0007669"/>
    <property type="project" value="UniProtKB-KW"/>
</dbReference>
<dbReference type="GO" id="GO:0016743">
    <property type="term" value="F:carboxyl- or carbamoyltransferase activity"/>
    <property type="evidence" value="ECO:0007669"/>
    <property type="project" value="UniProtKB-UniRule"/>
</dbReference>
<dbReference type="GO" id="GO:0006633">
    <property type="term" value="P:fatty acid biosynthetic process"/>
    <property type="evidence" value="ECO:0007669"/>
    <property type="project" value="UniProtKB-KW"/>
</dbReference>
<dbReference type="GO" id="GO:2001295">
    <property type="term" value="P:malonyl-CoA biosynthetic process"/>
    <property type="evidence" value="ECO:0007669"/>
    <property type="project" value="UniProtKB-UniRule"/>
</dbReference>
<dbReference type="Gene3D" id="3.90.226.10">
    <property type="entry name" value="2-enoyl-CoA Hydratase, Chain A, domain 1"/>
    <property type="match status" value="1"/>
</dbReference>
<dbReference type="HAMAP" id="MF_00823">
    <property type="entry name" value="AcetylCoA_CT_alpha"/>
    <property type="match status" value="1"/>
</dbReference>
<dbReference type="InterPro" id="IPR001095">
    <property type="entry name" value="Acetyl_CoA_COase_a_su"/>
</dbReference>
<dbReference type="InterPro" id="IPR029045">
    <property type="entry name" value="ClpP/crotonase-like_dom_sf"/>
</dbReference>
<dbReference type="InterPro" id="IPR011763">
    <property type="entry name" value="COA_CT_C"/>
</dbReference>
<dbReference type="NCBIfam" id="TIGR00513">
    <property type="entry name" value="accA"/>
    <property type="match status" value="1"/>
</dbReference>
<dbReference type="NCBIfam" id="NF041504">
    <property type="entry name" value="AccA_sub"/>
    <property type="match status" value="1"/>
</dbReference>
<dbReference type="NCBIfam" id="NF004344">
    <property type="entry name" value="PRK05724.1"/>
    <property type="match status" value="1"/>
</dbReference>
<dbReference type="PANTHER" id="PTHR42853">
    <property type="entry name" value="ACETYL-COENZYME A CARBOXYLASE CARBOXYL TRANSFERASE SUBUNIT ALPHA"/>
    <property type="match status" value="1"/>
</dbReference>
<dbReference type="PANTHER" id="PTHR42853:SF3">
    <property type="entry name" value="ACETYL-COENZYME A CARBOXYLASE CARBOXYL TRANSFERASE SUBUNIT ALPHA, CHLOROPLASTIC"/>
    <property type="match status" value="1"/>
</dbReference>
<dbReference type="Pfam" id="PF03255">
    <property type="entry name" value="ACCA"/>
    <property type="match status" value="1"/>
</dbReference>
<dbReference type="PRINTS" id="PR01069">
    <property type="entry name" value="ACCCTRFRASEA"/>
</dbReference>
<dbReference type="SUPFAM" id="SSF52096">
    <property type="entry name" value="ClpP/crotonase"/>
    <property type="match status" value="1"/>
</dbReference>
<dbReference type="PROSITE" id="PS50989">
    <property type="entry name" value="COA_CT_CTER"/>
    <property type="match status" value="1"/>
</dbReference>
<comment type="function">
    <text evidence="1">Component of the acetyl coenzyme A carboxylase (ACC) complex. First, biotin carboxylase catalyzes the carboxylation of biotin on its carrier protein (BCCP) and then the CO(2) group is transferred by the carboxyltransferase to acetyl-CoA to form malonyl-CoA.</text>
</comment>
<comment type="catalytic activity">
    <reaction evidence="1">
        <text>N(6)-carboxybiotinyl-L-lysyl-[protein] + acetyl-CoA = N(6)-biotinyl-L-lysyl-[protein] + malonyl-CoA</text>
        <dbReference type="Rhea" id="RHEA:54728"/>
        <dbReference type="Rhea" id="RHEA-COMP:10505"/>
        <dbReference type="Rhea" id="RHEA-COMP:10506"/>
        <dbReference type="ChEBI" id="CHEBI:57288"/>
        <dbReference type="ChEBI" id="CHEBI:57384"/>
        <dbReference type="ChEBI" id="CHEBI:83144"/>
        <dbReference type="ChEBI" id="CHEBI:83145"/>
        <dbReference type="EC" id="2.1.3.15"/>
    </reaction>
</comment>
<comment type="pathway">
    <text evidence="1">Lipid metabolism; malonyl-CoA biosynthesis; malonyl-CoA from acetyl-CoA: step 1/1.</text>
</comment>
<comment type="subunit">
    <text evidence="1">Acetyl-CoA carboxylase is a heterohexamer composed of biotin carboxyl carrier protein (AccB), biotin carboxylase (AccC) and two subunits each of ACCase subunit alpha (AccA) and ACCase subunit beta (AccD).</text>
</comment>
<comment type="subcellular location">
    <subcellularLocation>
        <location evidence="1">Cytoplasm</location>
    </subcellularLocation>
</comment>
<comment type="similarity">
    <text evidence="1">Belongs to the AccA family.</text>
</comment>
<accession>B0TI32</accession>
<proteinExistence type="inferred from homology"/>
<evidence type="ECO:0000255" key="1">
    <source>
        <dbReference type="HAMAP-Rule" id="MF_00823"/>
    </source>
</evidence>
<evidence type="ECO:0000255" key="2">
    <source>
        <dbReference type="PROSITE-ProRule" id="PRU01137"/>
    </source>
</evidence>
<reference key="1">
    <citation type="journal article" date="2008" name="J. Bacteriol.">
        <title>The genome of Heliobacterium modesticaldum, a phototrophic representative of the Firmicutes containing the simplest photosynthetic apparatus.</title>
        <authorList>
            <person name="Sattley W.M."/>
            <person name="Madigan M.T."/>
            <person name="Swingley W.D."/>
            <person name="Cheung P.C."/>
            <person name="Clocksin K.M."/>
            <person name="Conrad A.L."/>
            <person name="Dejesa L.C."/>
            <person name="Honchak B.M."/>
            <person name="Jung D.O."/>
            <person name="Karbach L.E."/>
            <person name="Kurdoglu A."/>
            <person name="Lahiri S."/>
            <person name="Mastrian S.D."/>
            <person name="Page L.E."/>
            <person name="Taylor H.L."/>
            <person name="Wang Z.T."/>
            <person name="Raymond J."/>
            <person name="Chen M."/>
            <person name="Blankenship R.E."/>
            <person name="Touchman J.W."/>
        </authorList>
    </citation>
    <scope>NUCLEOTIDE SEQUENCE [LARGE SCALE GENOMIC DNA]</scope>
    <source>
        <strain>ATCC 51547 / Ice1</strain>
    </source>
</reference>
<name>ACCA_HELMI</name>
<feature type="chain" id="PRO_1000134494" description="Acetyl-coenzyme A carboxylase carboxyl transferase subunit alpha">
    <location>
        <begin position="1"/>
        <end position="335"/>
    </location>
</feature>
<feature type="domain" description="CoA carboxyltransferase C-terminal" evidence="2">
    <location>
        <begin position="38"/>
        <end position="292"/>
    </location>
</feature>
<gene>
    <name evidence="1" type="primary">accA</name>
    <name type="ordered locus">Helmi_00800</name>
    <name type="ORF">HM1_0080</name>
</gene>
<organism>
    <name type="scientific">Heliobacterium modesticaldum (strain ATCC 51547 / Ice1)</name>
    <dbReference type="NCBI Taxonomy" id="498761"/>
    <lineage>
        <taxon>Bacteria</taxon>
        <taxon>Bacillati</taxon>
        <taxon>Bacillota</taxon>
        <taxon>Clostridia</taxon>
        <taxon>Eubacteriales</taxon>
        <taxon>Heliobacteriaceae</taxon>
        <taxon>Heliomicrobium</taxon>
    </lineage>
</organism>
<protein>
    <recommendedName>
        <fullName evidence="1">Acetyl-coenzyme A carboxylase carboxyl transferase subunit alpha</fullName>
        <shortName evidence="1">ACCase subunit alpha</shortName>
        <shortName evidence="1">Acetyl-CoA carboxylase carboxyltransferase subunit alpha</shortName>
        <ecNumber evidence="1">2.1.3.15</ecNumber>
    </recommendedName>
</protein>